<accession>Q2J2I6</accession>
<protein>
    <recommendedName>
        <fullName evidence="1">3-hydroxydecanoyl-[acyl-carrier-protein] dehydratase</fullName>
        <ecNumber evidence="1">4.2.1.59</ecNumber>
    </recommendedName>
    <alternativeName>
        <fullName evidence="1">3-hydroxyacyl-[acyl-carrier-protein] dehydratase FabA</fullName>
    </alternativeName>
    <alternativeName>
        <fullName evidence="1">Beta-hydroxydecanoyl thioester dehydrase</fullName>
    </alternativeName>
    <alternativeName>
        <fullName evidence="1">Trans-2-decenoyl-[acyl-carrier-protein] isomerase</fullName>
        <ecNumber evidence="1">5.3.3.14</ecNumber>
    </alternativeName>
</protein>
<keyword id="KW-0963">Cytoplasm</keyword>
<keyword id="KW-0275">Fatty acid biosynthesis</keyword>
<keyword id="KW-0276">Fatty acid metabolism</keyword>
<keyword id="KW-0413">Isomerase</keyword>
<keyword id="KW-0444">Lipid biosynthesis</keyword>
<keyword id="KW-0443">Lipid metabolism</keyword>
<keyword id="KW-0456">Lyase</keyword>
<keyword id="KW-1185">Reference proteome</keyword>
<feature type="chain" id="PRO_0000267747" description="3-hydroxydecanoyl-[acyl-carrier-protein] dehydratase">
    <location>
        <begin position="1"/>
        <end position="176"/>
    </location>
</feature>
<feature type="active site" evidence="1">
    <location>
        <position position="71"/>
    </location>
</feature>
<sequence>MQDRRSSYDYEDLLACGRGELFGAGNAQLPLPPMLMFDRITEINDSGGEHGKGLIRAELDVNPDLWFFACHFKGDPVMPGCLGLDAMWQLVGFFLGWSGGLGPGRALGLGELKFSGQVQPNIKKVVYNIDVKRVMRSKLWLGIADGTMAADGEIFYRAKDLKVGLFRQDAAVQPAV</sequence>
<gene>
    <name evidence="1" type="primary">fabA</name>
    <name type="ordered locus">RPB_0613</name>
</gene>
<evidence type="ECO:0000255" key="1">
    <source>
        <dbReference type="HAMAP-Rule" id="MF_00405"/>
    </source>
</evidence>
<proteinExistence type="inferred from homology"/>
<reference key="1">
    <citation type="submission" date="2006-01" db="EMBL/GenBank/DDBJ databases">
        <title>Complete sequence of Rhodopseudomonas palustris HaA2.</title>
        <authorList>
            <consortium name="US DOE Joint Genome Institute"/>
            <person name="Copeland A."/>
            <person name="Lucas S."/>
            <person name="Lapidus A."/>
            <person name="Barry K."/>
            <person name="Detter J.C."/>
            <person name="Glavina T."/>
            <person name="Hammon N."/>
            <person name="Israni S."/>
            <person name="Pitluck S."/>
            <person name="Chain P."/>
            <person name="Malfatti S."/>
            <person name="Shin M."/>
            <person name="Vergez L."/>
            <person name="Schmutz J."/>
            <person name="Larimer F."/>
            <person name="Land M."/>
            <person name="Hauser L."/>
            <person name="Pelletier D.A."/>
            <person name="Kyrpides N."/>
            <person name="Anderson I."/>
            <person name="Oda Y."/>
            <person name="Harwood C.S."/>
            <person name="Richardson P."/>
        </authorList>
    </citation>
    <scope>NUCLEOTIDE SEQUENCE [LARGE SCALE GENOMIC DNA]</scope>
    <source>
        <strain>HaA2</strain>
    </source>
</reference>
<organism>
    <name type="scientific">Rhodopseudomonas palustris (strain HaA2)</name>
    <dbReference type="NCBI Taxonomy" id="316058"/>
    <lineage>
        <taxon>Bacteria</taxon>
        <taxon>Pseudomonadati</taxon>
        <taxon>Pseudomonadota</taxon>
        <taxon>Alphaproteobacteria</taxon>
        <taxon>Hyphomicrobiales</taxon>
        <taxon>Nitrobacteraceae</taxon>
        <taxon>Rhodopseudomonas</taxon>
    </lineage>
</organism>
<comment type="function">
    <text evidence="1">Necessary for the introduction of cis unsaturation into fatty acids. Catalyzes the dehydration of (3R)-3-hydroxydecanoyl-ACP to E-(2)-decenoyl-ACP and then its isomerization to Z-(3)-decenoyl-ACP. Can catalyze the dehydratase reaction for beta-hydroxyacyl-ACPs with saturated chain lengths up to 16:0, being most active on intermediate chain length.</text>
</comment>
<comment type="catalytic activity">
    <reaction evidence="1">
        <text>a (3R)-hydroxyacyl-[ACP] = a (2E)-enoyl-[ACP] + H2O</text>
        <dbReference type="Rhea" id="RHEA:13097"/>
        <dbReference type="Rhea" id="RHEA-COMP:9925"/>
        <dbReference type="Rhea" id="RHEA-COMP:9945"/>
        <dbReference type="ChEBI" id="CHEBI:15377"/>
        <dbReference type="ChEBI" id="CHEBI:78784"/>
        <dbReference type="ChEBI" id="CHEBI:78827"/>
        <dbReference type="EC" id="4.2.1.59"/>
    </reaction>
</comment>
<comment type="catalytic activity">
    <reaction evidence="1">
        <text>(3R)-hydroxydecanoyl-[ACP] = (2E)-decenoyl-[ACP] + H2O</text>
        <dbReference type="Rhea" id="RHEA:41860"/>
        <dbReference type="Rhea" id="RHEA-COMP:9638"/>
        <dbReference type="Rhea" id="RHEA-COMP:9639"/>
        <dbReference type="ChEBI" id="CHEBI:15377"/>
        <dbReference type="ChEBI" id="CHEBI:78466"/>
        <dbReference type="ChEBI" id="CHEBI:78467"/>
    </reaction>
</comment>
<comment type="catalytic activity">
    <reaction evidence="1">
        <text>(2E)-decenoyl-[ACP] = (3Z)-decenoyl-[ACP]</text>
        <dbReference type="Rhea" id="RHEA:23568"/>
        <dbReference type="Rhea" id="RHEA-COMP:9639"/>
        <dbReference type="Rhea" id="RHEA-COMP:9927"/>
        <dbReference type="ChEBI" id="CHEBI:78467"/>
        <dbReference type="ChEBI" id="CHEBI:78798"/>
        <dbReference type="EC" id="5.3.3.14"/>
    </reaction>
</comment>
<comment type="pathway">
    <text evidence="1">Lipid metabolism; fatty acid biosynthesis.</text>
</comment>
<comment type="subunit">
    <text evidence="1">Homodimer.</text>
</comment>
<comment type="subcellular location">
    <subcellularLocation>
        <location evidence="1">Cytoplasm</location>
    </subcellularLocation>
</comment>
<comment type="similarity">
    <text evidence="1">Belongs to the thioester dehydratase family. FabA subfamily.</text>
</comment>
<name>FABA_RHOP2</name>
<dbReference type="EC" id="4.2.1.59" evidence="1"/>
<dbReference type="EC" id="5.3.3.14" evidence="1"/>
<dbReference type="EMBL" id="CP000250">
    <property type="protein sequence ID" value="ABD05324.1"/>
    <property type="molecule type" value="Genomic_DNA"/>
</dbReference>
<dbReference type="RefSeq" id="WP_011439514.1">
    <property type="nucleotide sequence ID" value="NC_007778.1"/>
</dbReference>
<dbReference type="SMR" id="Q2J2I6"/>
<dbReference type="STRING" id="316058.RPB_0613"/>
<dbReference type="KEGG" id="rpb:RPB_0613"/>
<dbReference type="eggNOG" id="COG0764">
    <property type="taxonomic scope" value="Bacteria"/>
</dbReference>
<dbReference type="HOGENOM" id="CLU_097925_0_0_5"/>
<dbReference type="OrthoDB" id="9786735at2"/>
<dbReference type="UniPathway" id="UPA00094"/>
<dbReference type="Proteomes" id="UP000008809">
    <property type="component" value="Chromosome"/>
</dbReference>
<dbReference type="GO" id="GO:0005737">
    <property type="term" value="C:cytoplasm"/>
    <property type="evidence" value="ECO:0007669"/>
    <property type="project" value="UniProtKB-SubCell"/>
</dbReference>
<dbReference type="GO" id="GO:0019171">
    <property type="term" value="F:(3R)-hydroxyacyl-[acyl-carrier-protein] dehydratase activity"/>
    <property type="evidence" value="ECO:0007669"/>
    <property type="project" value="UniProtKB-UniRule"/>
</dbReference>
<dbReference type="GO" id="GO:0034017">
    <property type="term" value="F:trans-2-decenoyl-acyl-carrier-protein isomerase activity"/>
    <property type="evidence" value="ECO:0007669"/>
    <property type="project" value="UniProtKB-UniRule"/>
</dbReference>
<dbReference type="GO" id="GO:0006636">
    <property type="term" value="P:unsaturated fatty acid biosynthetic process"/>
    <property type="evidence" value="ECO:0007669"/>
    <property type="project" value="UniProtKB-UniRule"/>
</dbReference>
<dbReference type="CDD" id="cd01287">
    <property type="entry name" value="FabA"/>
    <property type="match status" value="1"/>
</dbReference>
<dbReference type="Gene3D" id="3.10.129.10">
    <property type="entry name" value="Hotdog Thioesterase"/>
    <property type="match status" value="1"/>
</dbReference>
<dbReference type="HAMAP" id="MF_00405">
    <property type="entry name" value="FabA"/>
    <property type="match status" value="1"/>
</dbReference>
<dbReference type="InterPro" id="IPR010083">
    <property type="entry name" value="FabA"/>
</dbReference>
<dbReference type="InterPro" id="IPR013114">
    <property type="entry name" value="FabA_FabZ"/>
</dbReference>
<dbReference type="InterPro" id="IPR029069">
    <property type="entry name" value="HotDog_dom_sf"/>
</dbReference>
<dbReference type="NCBIfam" id="TIGR01749">
    <property type="entry name" value="fabA"/>
    <property type="match status" value="1"/>
</dbReference>
<dbReference type="NCBIfam" id="NF003509">
    <property type="entry name" value="PRK05174.1"/>
    <property type="match status" value="1"/>
</dbReference>
<dbReference type="PANTHER" id="PTHR30272">
    <property type="entry name" value="3-HYDROXYACYL-[ACYL-CARRIER-PROTEIN] DEHYDRATASE"/>
    <property type="match status" value="1"/>
</dbReference>
<dbReference type="PANTHER" id="PTHR30272:SF8">
    <property type="entry name" value="3-HYDROXYDECANOYL-[ACYL-CARRIER-PROTEIN] DEHYDRATASE"/>
    <property type="match status" value="1"/>
</dbReference>
<dbReference type="Pfam" id="PF07977">
    <property type="entry name" value="FabA"/>
    <property type="match status" value="1"/>
</dbReference>
<dbReference type="SUPFAM" id="SSF54637">
    <property type="entry name" value="Thioesterase/thiol ester dehydrase-isomerase"/>
    <property type="match status" value="1"/>
</dbReference>